<sequence>MDFEYVTGEEGLKKAIKRLENSPYLYLDTETTGDRIRLVQIGDEENTYVIDLYEIQDIEPLRKLINERGIVGHNLKFDLKYLYRYGIFPSATFDTMIASYLLGYERHSLNHIVSNLLGYSMDKSYQTSDWGASVLSDAQLKYAANDVIVLRELFPKMRDMLNELDAERGEELLKTRTAKIFDLKSPVAIVEMAFVREVAKLEINGFPVDVEELTNKLKAVERETQKRIQEFYIKYRVDPLSPKQLASLLTKKFKLNLPKTPKGNVSTDDKALTSYQDVEPVKLVLEIRKLKKIADKLKELKEHLKNGRVYPEFKQIGAVTGRMSSAHPNIQNIHRDMRGIFKAEEGNTFVISDFSQIELRIAAEYVKDPLMLDAFKKGKDMHRYTASVVLGKKEEEITKEERQLAKAINFGLIYGISAKGLAEYAKLGYGVEISLEEAQVLRERFFKNFKAFKEWHDRVKKELKEKGEVKGHTLLGRRFSANTFNDAVNYPIQGTGADLLKLAVLLFDANLQKKGIDAKLVNLVHDEIVVECEKEKAEEVKEILEKSMKTAGKIILKEVPVEVESVINERWTKD</sequence>
<gene>
    <name type="primary">polA</name>
    <name type="ordered locus">aq_1967</name>
</gene>
<feature type="chain" id="PRO_0000101232" description="DNA polymerase I">
    <location>
        <begin position="1"/>
        <end position="574"/>
    </location>
</feature>
<feature type="domain" description="3'-5' exonuclease" evidence="1">
    <location>
        <begin position="4"/>
        <end position="161"/>
    </location>
</feature>
<evidence type="ECO:0000255" key="1"/>
<evidence type="ECO:0000305" key="2"/>
<keyword id="KW-0227">DNA damage</keyword>
<keyword id="KW-0234">DNA repair</keyword>
<keyword id="KW-0235">DNA replication</keyword>
<keyword id="KW-0238">DNA-binding</keyword>
<keyword id="KW-0239">DNA-directed DNA polymerase</keyword>
<keyword id="KW-0548">Nucleotidyltransferase</keyword>
<keyword id="KW-1185">Reference proteome</keyword>
<keyword id="KW-0808">Transferase</keyword>
<protein>
    <recommendedName>
        <fullName>DNA polymerase I</fullName>
        <shortName>POL I</shortName>
        <ecNumber>2.7.7.7</ecNumber>
    </recommendedName>
</protein>
<accession>O67779</accession>
<reference key="1">
    <citation type="journal article" date="1998" name="Nature">
        <title>The complete genome of the hyperthermophilic bacterium Aquifex aeolicus.</title>
        <authorList>
            <person name="Deckert G."/>
            <person name="Warren P.V."/>
            <person name="Gaasterland T."/>
            <person name="Young W.G."/>
            <person name="Lenox A.L."/>
            <person name="Graham D.E."/>
            <person name="Overbeek R."/>
            <person name="Snead M.A."/>
            <person name="Keller M."/>
            <person name="Aujay M."/>
            <person name="Huber R."/>
            <person name="Feldman R.A."/>
            <person name="Short J.M."/>
            <person name="Olsen G.J."/>
            <person name="Swanson R.V."/>
        </authorList>
    </citation>
    <scope>NUCLEOTIDE SEQUENCE [LARGE SCALE GENOMIC DNA]</scope>
    <source>
        <strain>VF5</strain>
    </source>
</reference>
<name>DPO1_AQUAE</name>
<proteinExistence type="inferred from homology"/>
<dbReference type="EC" id="2.7.7.7"/>
<dbReference type="EMBL" id="AE000657">
    <property type="protein sequence ID" value="AAC07735.1"/>
    <property type="molecule type" value="Genomic_DNA"/>
</dbReference>
<dbReference type="PIR" id="G70468">
    <property type="entry name" value="G70468"/>
</dbReference>
<dbReference type="RefSeq" id="NP_214348.1">
    <property type="nucleotide sequence ID" value="NC_000918.1"/>
</dbReference>
<dbReference type="RefSeq" id="WP_010881284.1">
    <property type="nucleotide sequence ID" value="NC_000918.1"/>
</dbReference>
<dbReference type="SMR" id="O67779"/>
<dbReference type="FunCoup" id="O67779">
    <property type="interactions" value="432"/>
</dbReference>
<dbReference type="STRING" id="224324.aq_1967"/>
<dbReference type="DNASU" id="1193676"/>
<dbReference type="EnsemblBacteria" id="AAC07735">
    <property type="protein sequence ID" value="AAC07735"/>
    <property type="gene ID" value="aq_1967"/>
</dbReference>
<dbReference type="KEGG" id="aae:aq_1967"/>
<dbReference type="PATRIC" id="fig|224324.8.peg.1518"/>
<dbReference type="eggNOG" id="COG0749">
    <property type="taxonomic scope" value="Bacteria"/>
</dbReference>
<dbReference type="HOGENOM" id="CLU_004675_2_6_0"/>
<dbReference type="InParanoid" id="O67779"/>
<dbReference type="OrthoDB" id="9806424at2"/>
<dbReference type="Proteomes" id="UP000000798">
    <property type="component" value="Chromosome"/>
</dbReference>
<dbReference type="GO" id="GO:0008408">
    <property type="term" value="F:3'-5' exonuclease activity"/>
    <property type="evidence" value="ECO:0007669"/>
    <property type="project" value="InterPro"/>
</dbReference>
<dbReference type="GO" id="GO:0003677">
    <property type="term" value="F:DNA binding"/>
    <property type="evidence" value="ECO:0007669"/>
    <property type="project" value="UniProtKB-KW"/>
</dbReference>
<dbReference type="GO" id="GO:0003887">
    <property type="term" value="F:DNA-directed DNA polymerase activity"/>
    <property type="evidence" value="ECO:0007669"/>
    <property type="project" value="UniProtKB-KW"/>
</dbReference>
<dbReference type="GO" id="GO:0006281">
    <property type="term" value="P:DNA repair"/>
    <property type="evidence" value="ECO:0007669"/>
    <property type="project" value="UniProtKB-KW"/>
</dbReference>
<dbReference type="GO" id="GO:0006261">
    <property type="term" value="P:DNA-templated DNA replication"/>
    <property type="evidence" value="ECO:0007669"/>
    <property type="project" value="InterPro"/>
</dbReference>
<dbReference type="CDD" id="cd08639">
    <property type="entry name" value="DNA_pol_A_Aquificae_like"/>
    <property type="match status" value="1"/>
</dbReference>
<dbReference type="CDD" id="cd06142">
    <property type="entry name" value="RNaseD_exo"/>
    <property type="match status" value="1"/>
</dbReference>
<dbReference type="FunFam" id="1.10.150.20:FF:000002">
    <property type="entry name" value="DNA polymerase I"/>
    <property type="match status" value="1"/>
</dbReference>
<dbReference type="Gene3D" id="3.30.70.370">
    <property type="match status" value="1"/>
</dbReference>
<dbReference type="Gene3D" id="1.10.150.20">
    <property type="entry name" value="5' to 3' exonuclease, C-terminal subdomain"/>
    <property type="match status" value="1"/>
</dbReference>
<dbReference type="Gene3D" id="3.30.420.10">
    <property type="entry name" value="Ribonuclease H-like superfamily/Ribonuclease H"/>
    <property type="match status" value="1"/>
</dbReference>
<dbReference type="Gene3D" id="1.20.1060.10">
    <property type="entry name" value="Taq DNA Polymerase, Chain T, domain 4"/>
    <property type="match status" value="1"/>
</dbReference>
<dbReference type="InterPro" id="IPR002562">
    <property type="entry name" value="3'-5'_exonuclease_dom"/>
</dbReference>
<dbReference type="InterPro" id="IPR019760">
    <property type="entry name" value="DNA-dir_DNA_pol_A_CS"/>
</dbReference>
<dbReference type="InterPro" id="IPR001098">
    <property type="entry name" value="DNA-dir_DNA_pol_A_palm_dom"/>
</dbReference>
<dbReference type="InterPro" id="IPR043502">
    <property type="entry name" value="DNA/RNA_pol_sf"/>
</dbReference>
<dbReference type="InterPro" id="IPR002298">
    <property type="entry name" value="DNA_polymerase_A"/>
</dbReference>
<dbReference type="InterPro" id="IPR012337">
    <property type="entry name" value="RNaseH-like_sf"/>
</dbReference>
<dbReference type="InterPro" id="IPR036397">
    <property type="entry name" value="RNaseH_sf"/>
</dbReference>
<dbReference type="NCBIfam" id="NF011540">
    <property type="entry name" value="PRK14975.1-4"/>
    <property type="match status" value="1"/>
</dbReference>
<dbReference type="PANTHER" id="PTHR10133">
    <property type="entry name" value="DNA POLYMERASE I"/>
    <property type="match status" value="1"/>
</dbReference>
<dbReference type="PANTHER" id="PTHR10133:SF27">
    <property type="entry name" value="DNA POLYMERASE NU"/>
    <property type="match status" value="1"/>
</dbReference>
<dbReference type="Pfam" id="PF00476">
    <property type="entry name" value="DNA_pol_A"/>
    <property type="match status" value="1"/>
</dbReference>
<dbReference type="Pfam" id="PF01612">
    <property type="entry name" value="DNA_pol_A_exo1"/>
    <property type="match status" value="1"/>
</dbReference>
<dbReference type="PRINTS" id="PR00868">
    <property type="entry name" value="DNAPOLI"/>
</dbReference>
<dbReference type="SMART" id="SM00474">
    <property type="entry name" value="35EXOc"/>
    <property type="match status" value="1"/>
</dbReference>
<dbReference type="SMART" id="SM00482">
    <property type="entry name" value="POLAc"/>
    <property type="match status" value="1"/>
</dbReference>
<dbReference type="SUPFAM" id="SSF56672">
    <property type="entry name" value="DNA/RNA polymerases"/>
    <property type="match status" value="1"/>
</dbReference>
<dbReference type="SUPFAM" id="SSF53098">
    <property type="entry name" value="Ribonuclease H-like"/>
    <property type="match status" value="1"/>
</dbReference>
<dbReference type="PROSITE" id="PS00447">
    <property type="entry name" value="DNA_POLYMERASE_A"/>
    <property type="match status" value="1"/>
</dbReference>
<comment type="catalytic activity">
    <reaction>
        <text>DNA(n) + a 2'-deoxyribonucleoside 5'-triphosphate = DNA(n+1) + diphosphate</text>
        <dbReference type="Rhea" id="RHEA:22508"/>
        <dbReference type="Rhea" id="RHEA-COMP:17339"/>
        <dbReference type="Rhea" id="RHEA-COMP:17340"/>
        <dbReference type="ChEBI" id="CHEBI:33019"/>
        <dbReference type="ChEBI" id="CHEBI:61560"/>
        <dbReference type="ChEBI" id="CHEBI:173112"/>
        <dbReference type="EC" id="2.7.7.7"/>
    </reaction>
</comment>
<comment type="similarity">
    <text evidence="2">Belongs to the DNA polymerase type-A family.</text>
</comment>
<organism>
    <name type="scientific">Aquifex aeolicus (strain VF5)</name>
    <dbReference type="NCBI Taxonomy" id="224324"/>
    <lineage>
        <taxon>Bacteria</taxon>
        <taxon>Pseudomonadati</taxon>
        <taxon>Aquificota</taxon>
        <taxon>Aquificia</taxon>
        <taxon>Aquificales</taxon>
        <taxon>Aquificaceae</taxon>
        <taxon>Aquifex</taxon>
    </lineage>
</organism>